<sequence length="121" mass="14331">MDSNTITSFQDILQRMSKMQLESSSVDLNGMITQFERLKIYRDSLGESMMRMGDLHSLQNRNATWRNELSQKFEEIRWLIAECRNILTKTENSFEQITFLQALQLLLEVESEIRTFSFQLI</sequence>
<feature type="chain" id="PRO_0000324234" description="Nuclear export protein">
    <location>
        <begin position="1"/>
        <end position="121"/>
    </location>
</feature>
<feature type="short sequence motif" description="Nuclear export signal" evidence="1">
    <location>
        <begin position="12"/>
        <end position="21"/>
    </location>
</feature>
<feature type="short sequence motif" description="Nuclear export signal" evidence="1">
    <location>
        <begin position="85"/>
        <end position="94"/>
    </location>
</feature>
<comment type="function">
    <text evidence="1">Mediates the nuclear export of encapsidated genomic RNAs (ribonucleoproteins, RNPs). Acts as an adapter between viral RNPs complexes and the nuclear export machinery of the cell. Possesses no intrinsic RNA-binding activity, but includes a C-terminal M1-binding domain. This domain is believed to allow recognition of RNPs bound to the protein M1. Since protein M1 is not available in large quantities before late stages of infection, such an indirect recognition mechanism probably ensures that genomic RNPs are not exported from the host nucleus until sufficient quantities of viral mRNA and progeny genomic RNA have been synthesized. Furthermore, the RNPs enter the host cytoplasm only when associated with the M1 protein that is necessary to guide them to the plasma membrane. May down-regulate viral RNA synthesis when overproduced.</text>
</comment>
<comment type="subunit">
    <text evidence="1">Interacts with protein M1. May interact with host nucleoporin RAB/HRB and exportin XPO1/CRM1.</text>
</comment>
<comment type="subcellular location">
    <subcellularLocation>
        <location evidence="1">Virion</location>
    </subcellularLocation>
    <subcellularLocation>
        <location evidence="1">Host nucleus</location>
    </subcellularLocation>
</comment>
<comment type="alternative products">
    <event type="alternative splicing"/>
    <isoform>
        <id>Q9Q0L7-1</id>
        <name>NEP</name>
        <name>NS2</name>
        <sequence type="displayed"/>
    </isoform>
    <isoform>
        <id>Q9Q0L6-1</id>
        <name>NS1</name>
        <sequence type="external"/>
    </isoform>
</comment>
<comment type="similarity">
    <text evidence="1">Belongs to the influenza viruses NEP family.</text>
</comment>
<dbReference type="EMBL" id="AF144307">
    <property type="protein sequence ID" value="AAD51931.1"/>
    <property type="molecule type" value="Genomic_RNA"/>
</dbReference>
<dbReference type="RefSeq" id="YP_308672.1">
    <molecule id="Q9Q0L7-1"/>
    <property type="nucleotide sequence ID" value="NC_007364.1"/>
</dbReference>
<dbReference type="SMR" id="Q9Q0L7"/>
<dbReference type="KEGG" id="vg:3654622"/>
<dbReference type="OrthoDB" id="16129at10239"/>
<dbReference type="Proteomes" id="UP000131152">
    <property type="component" value="Genome"/>
</dbReference>
<dbReference type="GO" id="GO:0042025">
    <property type="term" value="C:host cell nucleus"/>
    <property type="evidence" value="ECO:0007669"/>
    <property type="project" value="UniProtKB-SubCell"/>
</dbReference>
<dbReference type="GO" id="GO:0044423">
    <property type="term" value="C:virion component"/>
    <property type="evidence" value="ECO:0007669"/>
    <property type="project" value="UniProtKB-UniRule"/>
</dbReference>
<dbReference type="GO" id="GO:0039675">
    <property type="term" value="P:exit of virus from host cell nucleus through nuclear pore"/>
    <property type="evidence" value="ECO:0007669"/>
    <property type="project" value="UniProtKB-UniRule"/>
</dbReference>
<dbReference type="Gene3D" id="1.10.287.230">
    <property type="match status" value="1"/>
</dbReference>
<dbReference type="HAMAP" id="MF_04067">
    <property type="entry name" value="INFV_NEP"/>
    <property type="match status" value="1"/>
</dbReference>
<dbReference type="InterPro" id="IPR000968">
    <property type="entry name" value="Flu_NS2"/>
</dbReference>
<dbReference type="Pfam" id="PF00601">
    <property type="entry name" value="Flu_NS2"/>
    <property type="match status" value="1"/>
</dbReference>
<dbReference type="SUPFAM" id="SSF101156">
    <property type="entry name" value="Nonstructural protein ns2, Nep, M1-binding domain"/>
    <property type="match status" value="1"/>
</dbReference>
<name>NEP_I96A0</name>
<gene>
    <name evidence="1" type="primary">NS</name>
</gene>
<keyword id="KW-0025">Alternative splicing</keyword>
<keyword id="KW-1048">Host nucleus</keyword>
<keyword id="KW-0945">Host-virus interaction</keyword>
<keyword id="KW-1185">Reference proteome</keyword>
<keyword id="KW-0813">Transport</keyword>
<keyword id="KW-0946">Virion</keyword>
<reference key="1">
    <citation type="journal article" date="1999" name="Virology">
        <title>Genetic characterization of the pathogenic influenza A/Goose/Guangdong/1/96 (H5N1) virus: similarity of its hemagglutinin gene to those of H5N1 viruses from the 1997 outbreaks in Hong Kong.</title>
        <authorList>
            <person name="Xu X."/>
            <person name="Subbarao K."/>
            <person name="Cox N.J."/>
            <person name="Guo Y."/>
        </authorList>
    </citation>
    <scope>NUCLEOTIDE SEQUENCE [GENOMIC RNA]</scope>
</reference>
<accession>Q9Q0L7</accession>
<organismHost>
    <name type="scientific">Aves</name>
    <dbReference type="NCBI Taxonomy" id="8782"/>
</organismHost>
<organismHost>
    <name type="scientific">Felis catus</name>
    <name type="common">Cat</name>
    <name type="synonym">Felis silvestris catus</name>
    <dbReference type="NCBI Taxonomy" id="9685"/>
</organismHost>
<organismHost>
    <name type="scientific">Homo sapiens</name>
    <name type="common">Human</name>
    <dbReference type="NCBI Taxonomy" id="9606"/>
</organismHost>
<organismHost>
    <name type="scientific">Panthera pardus</name>
    <name type="common">Leopard</name>
    <name type="synonym">Felis pardus</name>
    <dbReference type="NCBI Taxonomy" id="9691"/>
</organismHost>
<organismHost>
    <name type="scientific">Panthera tigris</name>
    <name type="common">Tiger</name>
    <dbReference type="NCBI Taxonomy" id="9694"/>
</organismHost>
<organismHost>
    <name type="scientific">Sus scrofa</name>
    <name type="common">Pig</name>
    <dbReference type="NCBI Taxonomy" id="9823"/>
</organismHost>
<evidence type="ECO:0000255" key="1">
    <source>
        <dbReference type="HAMAP-Rule" id="MF_04067"/>
    </source>
</evidence>
<protein>
    <recommendedName>
        <fullName evidence="1">Nuclear export protein</fullName>
        <shortName evidence="1">NEP</shortName>
    </recommendedName>
    <alternativeName>
        <fullName evidence="1">Non-structural protein 2</fullName>
        <shortName evidence="1">NS2</shortName>
    </alternativeName>
</protein>
<proteinExistence type="inferred from homology"/>
<organism>
    <name type="scientific">Influenza A virus (strain A/Goose/Guangdong/1/1996 H5N1 genotype Gs/Gd)</name>
    <dbReference type="NCBI Taxonomy" id="93838"/>
    <lineage>
        <taxon>Viruses</taxon>
        <taxon>Riboviria</taxon>
        <taxon>Orthornavirae</taxon>
        <taxon>Negarnaviricota</taxon>
        <taxon>Polyploviricotina</taxon>
        <taxon>Insthoviricetes</taxon>
        <taxon>Articulavirales</taxon>
        <taxon>Orthomyxoviridae</taxon>
        <taxon>Alphainfluenzavirus</taxon>
        <taxon>Alphainfluenzavirus influenzae</taxon>
        <taxon>Influenza A virus</taxon>
    </lineage>
</organism>